<organism>
    <name type="scientific">Staphylococcus aureus (strain COL)</name>
    <dbReference type="NCBI Taxonomy" id="93062"/>
    <lineage>
        <taxon>Bacteria</taxon>
        <taxon>Bacillati</taxon>
        <taxon>Bacillota</taxon>
        <taxon>Bacilli</taxon>
        <taxon>Bacillales</taxon>
        <taxon>Staphylococcaceae</taxon>
        <taxon>Staphylococcus</taxon>
    </lineage>
</organism>
<proteinExistence type="inferred from homology"/>
<comment type="function">
    <text evidence="1">Converts heme B (protoheme IX) to heme O by substitution of the vinyl group on carbon 2 of heme B porphyrin ring with a hydroxyethyl farnesyl side group.</text>
</comment>
<comment type="catalytic activity">
    <reaction evidence="1">
        <text>heme b + (2E,6E)-farnesyl diphosphate + H2O = Fe(II)-heme o + diphosphate</text>
        <dbReference type="Rhea" id="RHEA:28070"/>
        <dbReference type="ChEBI" id="CHEBI:15377"/>
        <dbReference type="ChEBI" id="CHEBI:33019"/>
        <dbReference type="ChEBI" id="CHEBI:60344"/>
        <dbReference type="ChEBI" id="CHEBI:60530"/>
        <dbReference type="ChEBI" id="CHEBI:175763"/>
        <dbReference type="EC" id="2.5.1.141"/>
    </reaction>
</comment>
<comment type="pathway">
    <text evidence="1">Porphyrin-containing compound metabolism; heme O biosynthesis; heme O from protoheme: step 1/1.</text>
</comment>
<comment type="subunit">
    <text evidence="1">Interacts with CtaA.</text>
</comment>
<comment type="subcellular location">
    <subcellularLocation>
        <location evidence="1">Cell membrane</location>
        <topology evidence="1">Multi-pass membrane protein</topology>
    </subcellularLocation>
</comment>
<comment type="miscellaneous">
    <text evidence="1">Carbon 2 of the heme B porphyrin ring is defined according to the Fischer nomenclature.</text>
</comment>
<comment type="similarity">
    <text evidence="1">Belongs to the UbiA prenyltransferase family. Protoheme IX farnesyltransferase subfamily.</text>
</comment>
<keyword id="KW-1003">Cell membrane</keyword>
<keyword id="KW-0350">Heme biosynthesis</keyword>
<keyword id="KW-0472">Membrane</keyword>
<keyword id="KW-0808">Transferase</keyword>
<keyword id="KW-0812">Transmembrane</keyword>
<keyword id="KW-1133">Transmembrane helix</keyword>
<gene>
    <name evidence="1" type="primary">ctaB</name>
    <name type="ordered locus">SACOL1125</name>
</gene>
<reference key="1">
    <citation type="journal article" date="2005" name="J. Bacteriol.">
        <title>Insights on evolution of virulence and resistance from the complete genome analysis of an early methicillin-resistant Staphylococcus aureus strain and a biofilm-producing methicillin-resistant Staphylococcus epidermidis strain.</title>
        <authorList>
            <person name="Gill S.R."/>
            <person name="Fouts D.E."/>
            <person name="Archer G.L."/>
            <person name="Mongodin E.F."/>
            <person name="DeBoy R.T."/>
            <person name="Ravel J."/>
            <person name="Paulsen I.T."/>
            <person name="Kolonay J.F."/>
            <person name="Brinkac L.M."/>
            <person name="Beanan M.J."/>
            <person name="Dodson R.J."/>
            <person name="Daugherty S.C."/>
            <person name="Madupu R."/>
            <person name="Angiuoli S.V."/>
            <person name="Durkin A.S."/>
            <person name="Haft D.H."/>
            <person name="Vamathevan J.J."/>
            <person name="Khouri H."/>
            <person name="Utterback T.R."/>
            <person name="Lee C."/>
            <person name="Dimitrov G."/>
            <person name="Jiang L."/>
            <person name="Qin H."/>
            <person name="Weidman J."/>
            <person name="Tran K."/>
            <person name="Kang K.H."/>
            <person name="Hance I.R."/>
            <person name="Nelson K.E."/>
            <person name="Fraser C.M."/>
        </authorList>
    </citation>
    <scope>NUCLEOTIDE SEQUENCE [LARGE SCALE GENOMIC DNA]</scope>
    <source>
        <strain>COL</strain>
    </source>
</reference>
<accession>Q5HGW8</accession>
<protein>
    <recommendedName>
        <fullName evidence="1">Protoheme IX farnesyltransferase</fullName>
        <ecNumber evidence="1">2.5.1.141</ecNumber>
    </recommendedName>
    <alternativeName>
        <fullName evidence="1">Heme B farnesyltransferase</fullName>
    </alternativeName>
    <alternativeName>
        <fullName evidence="1">Heme O synthase</fullName>
    </alternativeName>
</protein>
<sequence>MSKEHTLSQNISRVNFKELQQIIKMGLVQGNLIPAFAGAWLAVVMTNHSFLSSIPQILLMLFGSTLIMGGACALNNYYDQDIDRIMPSKQNRPTVNNRITDQNLLLLSFGMMLVGEICLFLLNIPSGVLGLMGIVGYVSYYSIWSKRHTTWNTVIGSFPGAVPPLIGWVAIEGQISLTAIALFLVVFCWQPIHFYALAIKRKDEYALANIPMLPSVKGFKRTRVSMFIWLIILLPVPLLLINLGVVFVVLATLLNLGWIALGLTTFKKNSDQTKWATQMFIYSLNYLVIFFVLAVIVSLLTLI</sequence>
<name>COXX_STAAC</name>
<dbReference type="EC" id="2.5.1.141" evidence="1"/>
<dbReference type="EMBL" id="CP000046">
    <property type="protein sequence ID" value="AAW38005.1"/>
    <property type="molecule type" value="Genomic_DNA"/>
</dbReference>
<dbReference type="SMR" id="Q5HGW8"/>
<dbReference type="KEGG" id="sac:SACOL1125"/>
<dbReference type="HOGENOM" id="CLU_029631_0_0_9"/>
<dbReference type="UniPathway" id="UPA00834">
    <property type="reaction ID" value="UER00712"/>
</dbReference>
<dbReference type="Proteomes" id="UP000000530">
    <property type="component" value="Chromosome"/>
</dbReference>
<dbReference type="GO" id="GO:0005886">
    <property type="term" value="C:plasma membrane"/>
    <property type="evidence" value="ECO:0007669"/>
    <property type="project" value="UniProtKB-SubCell"/>
</dbReference>
<dbReference type="GO" id="GO:0008495">
    <property type="term" value="F:protoheme IX farnesyltransferase activity"/>
    <property type="evidence" value="ECO:0007669"/>
    <property type="project" value="UniProtKB-UniRule"/>
</dbReference>
<dbReference type="GO" id="GO:0048034">
    <property type="term" value="P:heme O biosynthetic process"/>
    <property type="evidence" value="ECO:0007669"/>
    <property type="project" value="UniProtKB-UniRule"/>
</dbReference>
<dbReference type="CDD" id="cd13957">
    <property type="entry name" value="PT_UbiA_Cox10"/>
    <property type="match status" value="1"/>
</dbReference>
<dbReference type="Gene3D" id="1.10.357.140">
    <property type="entry name" value="UbiA prenyltransferase"/>
    <property type="match status" value="1"/>
</dbReference>
<dbReference type="HAMAP" id="MF_00154">
    <property type="entry name" value="CyoE_CtaB"/>
    <property type="match status" value="1"/>
</dbReference>
<dbReference type="InterPro" id="IPR006369">
    <property type="entry name" value="Protohaem_IX_farnesylTrfase"/>
</dbReference>
<dbReference type="InterPro" id="IPR000537">
    <property type="entry name" value="UbiA_prenyltransferase"/>
</dbReference>
<dbReference type="InterPro" id="IPR044878">
    <property type="entry name" value="UbiA_sf"/>
</dbReference>
<dbReference type="NCBIfam" id="TIGR01473">
    <property type="entry name" value="cyoE_ctaB"/>
    <property type="match status" value="1"/>
</dbReference>
<dbReference type="PANTHER" id="PTHR43448">
    <property type="entry name" value="PROTOHEME IX FARNESYLTRANSFERASE, MITOCHONDRIAL"/>
    <property type="match status" value="1"/>
</dbReference>
<dbReference type="PANTHER" id="PTHR43448:SF2">
    <property type="entry name" value="PROTOHEME IX FARNESYLTRANSFERASE, MITOCHONDRIAL"/>
    <property type="match status" value="1"/>
</dbReference>
<dbReference type="Pfam" id="PF01040">
    <property type="entry name" value="UbiA"/>
    <property type="match status" value="1"/>
</dbReference>
<feature type="chain" id="PRO_0000327155" description="Protoheme IX farnesyltransferase">
    <location>
        <begin position="1"/>
        <end position="303"/>
    </location>
</feature>
<feature type="transmembrane region" description="Helical" evidence="1">
    <location>
        <begin position="25"/>
        <end position="45"/>
    </location>
</feature>
<feature type="transmembrane region" description="Helical" evidence="1">
    <location>
        <begin position="54"/>
        <end position="74"/>
    </location>
</feature>
<feature type="transmembrane region" description="Helical" evidence="1">
    <location>
        <begin position="104"/>
        <end position="124"/>
    </location>
</feature>
<feature type="transmembrane region" description="Helical" evidence="1">
    <location>
        <begin position="125"/>
        <end position="145"/>
    </location>
</feature>
<feature type="transmembrane region" description="Helical" evidence="1">
    <location>
        <begin position="151"/>
        <end position="171"/>
    </location>
</feature>
<feature type="transmembrane region" description="Helical" evidence="1">
    <location>
        <begin position="179"/>
        <end position="199"/>
    </location>
</feature>
<feature type="transmembrane region" description="Helical" evidence="1">
    <location>
        <begin position="227"/>
        <end position="247"/>
    </location>
</feature>
<feature type="transmembrane region" description="Helical" evidence="1">
    <location>
        <begin position="248"/>
        <end position="268"/>
    </location>
</feature>
<feature type="transmembrane region" description="Helical" evidence="1">
    <location>
        <begin position="280"/>
        <end position="300"/>
    </location>
</feature>
<evidence type="ECO:0000255" key="1">
    <source>
        <dbReference type="HAMAP-Rule" id="MF_00154"/>
    </source>
</evidence>